<protein>
    <recommendedName>
        <fullName evidence="1">Low affinity potassium transport system protein Kup</fullName>
    </recommendedName>
    <alternativeName>
        <fullName evidence="1">Kup system potassium uptake protein</fullName>
    </alternativeName>
</protein>
<comment type="function">
    <text evidence="1">Responsible for the low-affinity transport of potassium into the cell. Likely operates as a K(+):H(+) symporter.</text>
</comment>
<comment type="catalytic activity">
    <reaction evidence="1">
        <text>K(+)(in) + H(+)(in) = K(+)(out) + H(+)(out)</text>
        <dbReference type="Rhea" id="RHEA:28490"/>
        <dbReference type="ChEBI" id="CHEBI:15378"/>
        <dbReference type="ChEBI" id="CHEBI:29103"/>
    </reaction>
    <physiologicalReaction direction="right-to-left" evidence="1">
        <dbReference type="Rhea" id="RHEA:28492"/>
    </physiologicalReaction>
</comment>
<comment type="subcellular location">
    <subcellularLocation>
        <location evidence="1">Cell inner membrane</location>
        <topology evidence="1">Multi-pass membrane protein</topology>
    </subcellularLocation>
</comment>
<comment type="similarity">
    <text evidence="1">Belongs to the HAK/KUP transporter (TC 2.A.72) family.</text>
</comment>
<gene>
    <name evidence="1" type="primary">kup</name>
    <name type="ordered locus">EcE24377A_4263</name>
</gene>
<sequence>MSTDNKQSLPAITLAAIGVVYGDIGTSPLYTLRECLSGQFGFGVERDAVFGFLSLIFWLLIFVVSIKYLTFVMRADNAGEGGILTLMSLAGRNTSARTTSMLVIMGLIGGSFFYGEVVITPAISVMSAIEGLEIVAPQLDTWIVPLSIIVLTLLFMIQKHGTAMVGKLFAPIMLTWFLILAGLGLRSIIANPEVLHALNPMWAVHFFLEYKTVSFIALGAVVLSITGVEALYADMGHFGKFPIRLAWFTVVLPSLTLNYFGQGALLLKNPEAIKNPFFLLAPDWALIPLLIIAALATVIASQAVISGVFSLTRQAVRLGYLSPMRIIHTSEMESGQIYIPFVNWMLYVAVVIVIVSFEHSSNLAAAYGIAVTGTMVLTSILSTTVARQNWHWNKYFVALILIAFLCVDIPLFTANLDKLLSGGWLPLSLGTVMFIVMTTWKSERFRLLRRMHEHGNSLEAMIASLEKSPPVRVPGTAVYMSRAINVIPFALMHNLKHNKVLHERVILLTLRTEDAPYVHNVRRVQIEQLSPTFWRVVASYGWRETPNVEEVFHRCGLEGLSCRMMETSFFMSHESLILGKRPWYLRLRGKLYLLLQRNALRAPDQFEIPPNRVIELGTQVEI</sequence>
<reference key="1">
    <citation type="journal article" date="2008" name="J. Bacteriol.">
        <title>The pangenome structure of Escherichia coli: comparative genomic analysis of E. coli commensal and pathogenic isolates.</title>
        <authorList>
            <person name="Rasko D.A."/>
            <person name="Rosovitz M.J."/>
            <person name="Myers G.S.A."/>
            <person name="Mongodin E.F."/>
            <person name="Fricke W.F."/>
            <person name="Gajer P."/>
            <person name="Crabtree J."/>
            <person name="Sebaihia M."/>
            <person name="Thomson N.R."/>
            <person name="Chaudhuri R."/>
            <person name="Henderson I.R."/>
            <person name="Sperandio V."/>
            <person name="Ravel J."/>
        </authorList>
    </citation>
    <scope>NUCLEOTIDE SEQUENCE [LARGE SCALE GENOMIC DNA]</scope>
    <source>
        <strain>E24377A / ETEC</strain>
    </source>
</reference>
<keyword id="KW-0997">Cell inner membrane</keyword>
<keyword id="KW-1003">Cell membrane</keyword>
<keyword id="KW-0406">Ion transport</keyword>
<keyword id="KW-0472">Membrane</keyword>
<keyword id="KW-0630">Potassium</keyword>
<keyword id="KW-0633">Potassium transport</keyword>
<keyword id="KW-1185">Reference proteome</keyword>
<keyword id="KW-0769">Symport</keyword>
<keyword id="KW-0812">Transmembrane</keyword>
<keyword id="KW-1133">Transmembrane helix</keyword>
<keyword id="KW-0813">Transport</keyword>
<accession>A7ZTV8</accession>
<name>KUP_ECO24</name>
<dbReference type="EMBL" id="CP000800">
    <property type="protein sequence ID" value="ABV21157.1"/>
    <property type="molecule type" value="Genomic_DNA"/>
</dbReference>
<dbReference type="RefSeq" id="WP_000102319.1">
    <property type="nucleotide sequence ID" value="NC_009801.1"/>
</dbReference>
<dbReference type="GeneID" id="75205465"/>
<dbReference type="KEGG" id="ecw:EcE24377A_4263"/>
<dbReference type="HOGENOM" id="CLU_008142_4_2_6"/>
<dbReference type="Proteomes" id="UP000001122">
    <property type="component" value="Chromosome"/>
</dbReference>
<dbReference type="GO" id="GO:0005886">
    <property type="term" value="C:plasma membrane"/>
    <property type="evidence" value="ECO:0007669"/>
    <property type="project" value="UniProtKB-SubCell"/>
</dbReference>
<dbReference type="GO" id="GO:0015079">
    <property type="term" value="F:potassium ion transmembrane transporter activity"/>
    <property type="evidence" value="ECO:0007669"/>
    <property type="project" value="UniProtKB-UniRule"/>
</dbReference>
<dbReference type="GO" id="GO:0015293">
    <property type="term" value="F:symporter activity"/>
    <property type="evidence" value="ECO:0007669"/>
    <property type="project" value="UniProtKB-UniRule"/>
</dbReference>
<dbReference type="HAMAP" id="MF_01522">
    <property type="entry name" value="Kup"/>
    <property type="match status" value="1"/>
</dbReference>
<dbReference type="InterPro" id="IPR003855">
    <property type="entry name" value="K+_transporter"/>
</dbReference>
<dbReference type="InterPro" id="IPR053952">
    <property type="entry name" value="K_trans_C"/>
</dbReference>
<dbReference type="InterPro" id="IPR053951">
    <property type="entry name" value="K_trans_N"/>
</dbReference>
<dbReference type="InterPro" id="IPR023051">
    <property type="entry name" value="Kup"/>
</dbReference>
<dbReference type="NCBIfam" id="TIGR00794">
    <property type="entry name" value="kup"/>
    <property type="match status" value="1"/>
</dbReference>
<dbReference type="NCBIfam" id="NF008015">
    <property type="entry name" value="PRK10745.1"/>
    <property type="match status" value="1"/>
</dbReference>
<dbReference type="PANTHER" id="PTHR30540:SF79">
    <property type="entry name" value="LOW AFFINITY POTASSIUM TRANSPORT SYSTEM PROTEIN KUP"/>
    <property type="match status" value="1"/>
</dbReference>
<dbReference type="PANTHER" id="PTHR30540">
    <property type="entry name" value="OSMOTIC STRESS POTASSIUM TRANSPORTER"/>
    <property type="match status" value="1"/>
</dbReference>
<dbReference type="Pfam" id="PF02705">
    <property type="entry name" value="K_trans"/>
    <property type="match status" value="1"/>
</dbReference>
<dbReference type="Pfam" id="PF22776">
    <property type="entry name" value="K_trans_C"/>
    <property type="match status" value="1"/>
</dbReference>
<organism>
    <name type="scientific">Escherichia coli O139:H28 (strain E24377A / ETEC)</name>
    <dbReference type="NCBI Taxonomy" id="331111"/>
    <lineage>
        <taxon>Bacteria</taxon>
        <taxon>Pseudomonadati</taxon>
        <taxon>Pseudomonadota</taxon>
        <taxon>Gammaproteobacteria</taxon>
        <taxon>Enterobacterales</taxon>
        <taxon>Enterobacteriaceae</taxon>
        <taxon>Escherichia</taxon>
    </lineage>
</organism>
<evidence type="ECO:0000255" key="1">
    <source>
        <dbReference type="HAMAP-Rule" id="MF_01522"/>
    </source>
</evidence>
<proteinExistence type="inferred from homology"/>
<feature type="chain" id="PRO_1000068645" description="Low affinity potassium transport system protein Kup">
    <location>
        <begin position="1"/>
        <end position="622"/>
    </location>
</feature>
<feature type="transmembrane region" description="Helical" evidence="1">
    <location>
        <begin position="9"/>
        <end position="29"/>
    </location>
</feature>
<feature type="transmembrane region" description="Helical" evidence="1">
    <location>
        <begin position="49"/>
        <end position="69"/>
    </location>
</feature>
<feature type="transmembrane region" description="Helical" evidence="1">
    <location>
        <begin position="103"/>
        <end position="123"/>
    </location>
</feature>
<feature type="transmembrane region" description="Helical" evidence="1">
    <location>
        <begin position="137"/>
        <end position="157"/>
    </location>
</feature>
<feature type="transmembrane region" description="Helical" evidence="1">
    <location>
        <begin position="165"/>
        <end position="185"/>
    </location>
</feature>
<feature type="transmembrane region" description="Helical" evidence="1">
    <location>
        <begin position="213"/>
        <end position="233"/>
    </location>
</feature>
<feature type="transmembrane region" description="Helical" evidence="1">
    <location>
        <begin position="247"/>
        <end position="267"/>
    </location>
</feature>
<feature type="transmembrane region" description="Helical" evidence="1">
    <location>
        <begin position="276"/>
        <end position="296"/>
    </location>
</feature>
<feature type="transmembrane region" description="Helical" evidence="1">
    <location>
        <begin position="337"/>
        <end position="357"/>
    </location>
</feature>
<feature type="transmembrane region" description="Helical" evidence="1">
    <location>
        <begin position="363"/>
        <end position="383"/>
    </location>
</feature>
<feature type="transmembrane region" description="Helical" evidence="1">
    <location>
        <begin position="396"/>
        <end position="416"/>
    </location>
</feature>
<feature type="transmembrane region" description="Helical" evidence="1">
    <location>
        <begin position="419"/>
        <end position="439"/>
    </location>
</feature>